<keyword id="KW-0067">ATP-binding</keyword>
<keyword id="KW-0963">Cytoplasm</keyword>
<keyword id="KW-0418">Kinase</keyword>
<keyword id="KW-0460">Magnesium</keyword>
<keyword id="KW-0479">Metal-binding</keyword>
<keyword id="KW-0547">Nucleotide-binding</keyword>
<keyword id="KW-1185">Reference proteome</keyword>
<keyword id="KW-0808">Transferase</keyword>
<gene>
    <name evidence="1" type="primary">ackA</name>
    <name type="ordered locus">BCc_114</name>
</gene>
<dbReference type="EC" id="2.7.2.1" evidence="1"/>
<dbReference type="EMBL" id="CP000263">
    <property type="protein sequence ID" value="ABJ90591.1"/>
    <property type="molecule type" value="Genomic_DNA"/>
</dbReference>
<dbReference type="RefSeq" id="WP_011672510.1">
    <property type="nucleotide sequence ID" value="NC_008513.1"/>
</dbReference>
<dbReference type="SMR" id="Q057V8"/>
<dbReference type="STRING" id="372461.BCc_114"/>
<dbReference type="KEGG" id="bcc:BCc_114"/>
<dbReference type="eggNOG" id="COG0282">
    <property type="taxonomic scope" value="Bacteria"/>
</dbReference>
<dbReference type="HOGENOM" id="CLU_020352_0_0_6"/>
<dbReference type="OrthoDB" id="9802453at2"/>
<dbReference type="UniPathway" id="UPA00340">
    <property type="reaction ID" value="UER00458"/>
</dbReference>
<dbReference type="Proteomes" id="UP000000669">
    <property type="component" value="Chromosome"/>
</dbReference>
<dbReference type="GO" id="GO:0005829">
    <property type="term" value="C:cytosol"/>
    <property type="evidence" value="ECO:0007669"/>
    <property type="project" value="TreeGrafter"/>
</dbReference>
<dbReference type="GO" id="GO:0008776">
    <property type="term" value="F:acetate kinase activity"/>
    <property type="evidence" value="ECO:0007669"/>
    <property type="project" value="UniProtKB-UniRule"/>
</dbReference>
<dbReference type="GO" id="GO:0005524">
    <property type="term" value="F:ATP binding"/>
    <property type="evidence" value="ECO:0007669"/>
    <property type="project" value="UniProtKB-KW"/>
</dbReference>
<dbReference type="GO" id="GO:0000287">
    <property type="term" value="F:magnesium ion binding"/>
    <property type="evidence" value="ECO:0007669"/>
    <property type="project" value="UniProtKB-UniRule"/>
</dbReference>
<dbReference type="GO" id="GO:0006083">
    <property type="term" value="P:acetate metabolic process"/>
    <property type="evidence" value="ECO:0007669"/>
    <property type="project" value="TreeGrafter"/>
</dbReference>
<dbReference type="GO" id="GO:0006085">
    <property type="term" value="P:acetyl-CoA biosynthetic process"/>
    <property type="evidence" value="ECO:0007669"/>
    <property type="project" value="UniProtKB-UniRule"/>
</dbReference>
<dbReference type="Gene3D" id="3.30.420.40">
    <property type="match status" value="2"/>
</dbReference>
<dbReference type="HAMAP" id="MF_00020">
    <property type="entry name" value="Acetate_kinase"/>
    <property type="match status" value="1"/>
</dbReference>
<dbReference type="InterPro" id="IPR004372">
    <property type="entry name" value="Ac/propionate_kinase"/>
</dbReference>
<dbReference type="InterPro" id="IPR000890">
    <property type="entry name" value="Aliphatic_acid_kin_short-chain"/>
</dbReference>
<dbReference type="InterPro" id="IPR023865">
    <property type="entry name" value="Aliphatic_acid_kinase_CS"/>
</dbReference>
<dbReference type="InterPro" id="IPR043129">
    <property type="entry name" value="ATPase_NBD"/>
</dbReference>
<dbReference type="NCBIfam" id="TIGR00016">
    <property type="entry name" value="ackA"/>
    <property type="match status" value="1"/>
</dbReference>
<dbReference type="PANTHER" id="PTHR21060">
    <property type="entry name" value="ACETATE KINASE"/>
    <property type="match status" value="1"/>
</dbReference>
<dbReference type="PANTHER" id="PTHR21060:SF17">
    <property type="entry name" value="PROPIONATE KINASE"/>
    <property type="match status" value="1"/>
</dbReference>
<dbReference type="Pfam" id="PF00871">
    <property type="entry name" value="Acetate_kinase"/>
    <property type="match status" value="1"/>
</dbReference>
<dbReference type="PIRSF" id="PIRSF000722">
    <property type="entry name" value="Acetate_prop_kin"/>
    <property type="match status" value="1"/>
</dbReference>
<dbReference type="PRINTS" id="PR00471">
    <property type="entry name" value="ACETATEKNASE"/>
</dbReference>
<dbReference type="SUPFAM" id="SSF53067">
    <property type="entry name" value="Actin-like ATPase domain"/>
    <property type="match status" value="2"/>
</dbReference>
<dbReference type="PROSITE" id="PS01075">
    <property type="entry name" value="ACETATE_KINASE_1"/>
    <property type="match status" value="1"/>
</dbReference>
<dbReference type="PROSITE" id="PS01076">
    <property type="entry name" value="ACETATE_KINASE_2"/>
    <property type="match status" value="1"/>
</dbReference>
<organism>
    <name type="scientific">Buchnera aphidicola subsp. Cinara cedri (strain Cc)</name>
    <dbReference type="NCBI Taxonomy" id="372461"/>
    <lineage>
        <taxon>Bacteria</taxon>
        <taxon>Pseudomonadati</taxon>
        <taxon>Pseudomonadota</taxon>
        <taxon>Gammaproteobacteria</taxon>
        <taxon>Enterobacterales</taxon>
        <taxon>Erwiniaceae</taxon>
        <taxon>Buchnera</taxon>
    </lineage>
</organism>
<feature type="chain" id="PRO_1000089963" description="Acetate kinase">
    <location>
        <begin position="1"/>
        <end position="406"/>
    </location>
</feature>
<feature type="active site" description="Proton donor/acceptor" evidence="1">
    <location>
        <position position="151"/>
    </location>
</feature>
<feature type="binding site" evidence="1">
    <location>
        <position position="10"/>
    </location>
    <ligand>
        <name>Mg(2+)</name>
        <dbReference type="ChEBI" id="CHEBI:18420"/>
    </ligand>
</feature>
<feature type="binding site" evidence="1">
    <location>
        <position position="17"/>
    </location>
    <ligand>
        <name>ATP</name>
        <dbReference type="ChEBI" id="CHEBI:30616"/>
    </ligand>
</feature>
<feature type="binding site" evidence="1">
    <location>
        <position position="92"/>
    </location>
    <ligand>
        <name>substrate</name>
    </ligand>
</feature>
<feature type="binding site" evidence="1">
    <location>
        <begin position="211"/>
        <end position="215"/>
    </location>
    <ligand>
        <name>ATP</name>
        <dbReference type="ChEBI" id="CHEBI:30616"/>
    </ligand>
</feature>
<feature type="binding site" evidence="1">
    <location>
        <begin position="286"/>
        <end position="288"/>
    </location>
    <ligand>
        <name>ATP</name>
        <dbReference type="ChEBI" id="CHEBI:30616"/>
    </ligand>
</feature>
<feature type="binding site" evidence="1">
    <location>
        <begin position="335"/>
        <end position="339"/>
    </location>
    <ligand>
        <name>ATP</name>
        <dbReference type="ChEBI" id="CHEBI:30616"/>
    </ligand>
</feature>
<feature type="binding site" evidence="1">
    <location>
        <position position="389"/>
    </location>
    <ligand>
        <name>Mg(2+)</name>
        <dbReference type="ChEBI" id="CHEBI:18420"/>
    </ligand>
</feature>
<feature type="site" description="Transition state stabilizer" evidence="1">
    <location>
        <position position="183"/>
    </location>
</feature>
<feature type="site" description="Transition state stabilizer" evidence="1">
    <location>
        <position position="244"/>
    </location>
</feature>
<comment type="function">
    <text evidence="1">Catalyzes the formation of acetyl phosphate from acetate and ATP. Can also catalyze the reverse reaction.</text>
</comment>
<comment type="catalytic activity">
    <reaction evidence="1">
        <text>acetate + ATP = acetyl phosphate + ADP</text>
        <dbReference type="Rhea" id="RHEA:11352"/>
        <dbReference type="ChEBI" id="CHEBI:22191"/>
        <dbReference type="ChEBI" id="CHEBI:30089"/>
        <dbReference type="ChEBI" id="CHEBI:30616"/>
        <dbReference type="ChEBI" id="CHEBI:456216"/>
        <dbReference type="EC" id="2.7.2.1"/>
    </reaction>
</comment>
<comment type="cofactor">
    <cofactor evidence="1">
        <name>Mg(2+)</name>
        <dbReference type="ChEBI" id="CHEBI:18420"/>
    </cofactor>
    <cofactor evidence="1">
        <name>Mn(2+)</name>
        <dbReference type="ChEBI" id="CHEBI:29035"/>
    </cofactor>
    <text evidence="1">Mg(2+). Can also accept Mn(2+).</text>
</comment>
<comment type="pathway">
    <text evidence="1">Metabolic intermediate biosynthesis; acetyl-CoA biosynthesis; acetyl-CoA from acetate: step 1/2.</text>
</comment>
<comment type="subunit">
    <text evidence="1">Homodimer.</text>
</comment>
<comment type="subcellular location">
    <subcellularLocation>
        <location evidence="1">Cytoplasm</location>
    </subcellularLocation>
</comment>
<comment type="similarity">
    <text evidence="1">Belongs to the acetokinase family.</text>
</comment>
<reference key="1">
    <citation type="journal article" date="2006" name="Science">
        <title>A small microbial genome: the end of a long symbiotic relationship?</title>
        <authorList>
            <person name="Perez-Brocal V."/>
            <person name="Gil R."/>
            <person name="Ramos S."/>
            <person name="Lamelas A."/>
            <person name="Postigo M."/>
            <person name="Michelena J.M."/>
            <person name="Silva F.J."/>
            <person name="Moya A."/>
            <person name="Latorre A."/>
        </authorList>
    </citation>
    <scope>NUCLEOTIDE SEQUENCE [LARGE SCALE GENOMIC DNA]</scope>
    <source>
        <strain>Cc</strain>
    </source>
</reference>
<accession>Q057V8</accession>
<evidence type="ECO:0000255" key="1">
    <source>
        <dbReference type="HAMAP-Rule" id="MF_00020"/>
    </source>
</evidence>
<proteinExistence type="inferred from homology"/>
<sequence>MKKKLILVLNCGSSSVKFSIIDVIEGVLYISGIANTINNVSFLKIYDIKKKIKIVKKNISTDSYKKLILLICDLLFIHFNKYLKLIIGIGHRIVHGGKDIKKSMIINKKILLKIKKSAIFAPLHNPYHLIAIKIILNKFVKLKNRNVAVFDTSFHQTMPKKSFLYGIPYSFYKKYSIRKYGAHGINHFYITHECSLFLKKSTNNLNIISCHLGSGSSITAIVNGKSIDTSMGLTPLEGLVMGTRCGDIDPYIIIYMIKKLNFSITQIQKILTKSSGVLGISSITSDFRELEKKYYSHKKAKLAIDIFCRRVSKYIAGYSSLMPKGKLDAIVFTGGIGENSSFIRKKIIKNLSIIGFFLDIEKNLIKTGNNNRFIHTINSKPILVIPADENKIIAKETYNILIKNNF</sequence>
<name>ACKA_BUCCC</name>
<protein>
    <recommendedName>
        <fullName evidence="1">Acetate kinase</fullName>
        <ecNumber evidence="1">2.7.2.1</ecNumber>
    </recommendedName>
    <alternativeName>
        <fullName evidence="1">Acetokinase</fullName>
    </alternativeName>
</protein>